<comment type="function">
    <text evidence="1">DNA-dependent RNA polymerase catalyzes the transcription of DNA into RNA using the four ribonucleoside triphosphates as substrates.</text>
</comment>
<comment type="catalytic activity">
    <reaction evidence="1">
        <text>RNA(n) + a ribonucleoside 5'-triphosphate = RNA(n+1) + diphosphate</text>
        <dbReference type="Rhea" id="RHEA:21248"/>
        <dbReference type="Rhea" id="RHEA-COMP:14527"/>
        <dbReference type="Rhea" id="RHEA-COMP:17342"/>
        <dbReference type="ChEBI" id="CHEBI:33019"/>
        <dbReference type="ChEBI" id="CHEBI:61557"/>
        <dbReference type="ChEBI" id="CHEBI:140395"/>
        <dbReference type="EC" id="2.7.7.6"/>
    </reaction>
</comment>
<comment type="subunit">
    <text evidence="1">Homodimer. The RNAP catalytic core consists of 2 alpha, 1 beta, 1 beta' and 1 omega subunit. When a sigma factor is associated with the core the holoenzyme is formed, which can initiate transcription.</text>
</comment>
<comment type="domain">
    <text evidence="1">The N-terminal domain is essential for RNAP assembly and basal transcription, whereas the C-terminal domain is involved in interaction with transcriptional regulators and with upstream promoter elements.</text>
</comment>
<comment type="similarity">
    <text evidence="1">Belongs to the RNA polymerase alpha chain family.</text>
</comment>
<gene>
    <name evidence="1" type="primary">rpoA</name>
    <name type="ordered locus">NGR_c12140</name>
</gene>
<name>RPOA_SINFN</name>
<protein>
    <recommendedName>
        <fullName evidence="1">DNA-directed RNA polymerase subunit alpha</fullName>
        <shortName evidence="1">RNAP subunit alpha</shortName>
        <ecNumber evidence="1">2.7.7.6</ecNumber>
    </recommendedName>
    <alternativeName>
        <fullName evidence="1">RNA polymerase subunit alpha</fullName>
    </alternativeName>
    <alternativeName>
        <fullName evidence="1">Transcriptase subunit alpha</fullName>
    </alternativeName>
</protein>
<keyword id="KW-0240">DNA-directed RNA polymerase</keyword>
<keyword id="KW-0548">Nucleotidyltransferase</keyword>
<keyword id="KW-1185">Reference proteome</keyword>
<keyword id="KW-0804">Transcription</keyword>
<keyword id="KW-0808">Transferase</keyword>
<proteinExistence type="inferred from homology"/>
<organism>
    <name type="scientific">Sinorhizobium fredii (strain NBRC 101917 / NGR234)</name>
    <dbReference type="NCBI Taxonomy" id="394"/>
    <lineage>
        <taxon>Bacteria</taxon>
        <taxon>Pseudomonadati</taxon>
        <taxon>Pseudomonadota</taxon>
        <taxon>Alphaproteobacteria</taxon>
        <taxon>Hyphomicrobiales</taxon>
        <taxon>Rhizobiaceae</taxon>
        <taxon>Sinorhizobium/Ensifer group</taxon>
        <taxon>Sinorhizobium</taxon>
    </lineage>
</organism>
<sequence length="336" mass="37187">MIQKNWQELIKPNKVDFTSSGRTKATLVAEPLERGFGLTLGNALRRVLLSSLRGAAVTAVQIDGVLHEFSSIPGVREDVTDIVLNIKEIAIKMDGDDSKRMVVRKQGPGVVTAGDIQTVGDIEILNPNHVICTLDEGAEIRMEFTVNNGKGYVPAERNRSEDAPIGLIPVDSLYSPVKKVSYKVENTREGQVLDYDKLTMSIETDGSVTGEDAIAFAARILQDQLSVFVNFDEPQKEAEEEAVTELAFNPALLKKVDELELSVRSANCLKNDNIVYIGDLIQKTEAEMLRTPNFGRKSLNEIKEVLASMGLHLGMEVPSWPPENIEDLAKRYEDQY</sequence>
<accession>C3MB03</accession>
<evidence type="ECO:0000255" key="1">
    <source>
        <dbReference type="HAMAP-Rule" id="MF_00059"/>
    </source>
</evidence>
<feature type="chain" id="PRO_1000196646" description="DNA-directed RNA polymerase subunit alpha">
    <location>
        <begin position="1"/>
        <end position="336"/>
    </location>
</feature>
<feature type="region of interest" description="Alpha N-terminal domain (alpha-NTD)" evidence="1">
    <location>
        <begin position="1"/>
        <end position="232"/>
    </location>
</feature>
<feature type="region of interest" description="Alpha C-terminal domain (alpha-CTD)" evidence="1">
    <location>
        <begin position="248"/>
        <end position="336"/>
    </location>
</feature>
<reference key="1">
    <citation type="journal article" date="2009" name="Appl. Environ. Microbiol.">
        <title>Rhizobium sp. strain NGR234 possesses a remarkable number of secretion systems.</title>
        <authorList>
            <person name="Schmeisser C."/>
            <person name="Liesegang H."/>
            <person name="Krysciak D."/>
            <person name="Bakkou N."/>
            <person name="Le Quere A."/>
            <person name="Wollherr A."/>
            <person name="Heinemeyer I."/>
            <person name="Morgenstern B."/>
            <person name="Pommerening-Roeser A."/>
            <person name="Flores M."/>
            <person name="Palacios R."/>
            <person name="Brenner S."/>
            <person name="Gottschalk G."/>
            <person name="Schmitz R.A."/>
            <person name="Broughton W.J."/>
            <person name="Perret X."/>
            <person name="Strittmatter A.W."/>
            <person name="Streit W.R."/>
        </authorList>
    </citation>
    <scope>NUCLEOTIDE SEQUENCE [LARGE SCALE GENOMIC DNA]</scope>
    <source>
        <strain>NBRC 101917 / NGR234</strain>
    </source>
</reference>
<dbReference type="EC" id="2.7.7.6" evidence="1"/>
<dbReference type="EMBL" id="CP001389">
    <property type="protein sequence ID" value="ACP24996.1"/>
    <property type="molecule type" value="Genomic_DNA"/>
</dbReference>
<dbReference type="RefSeq" id="WP_012707773.1">
    <property type="nucleotide sequence ID" value="NC_012587.1"/>
</dbReference>
<dbReference type="RefSeq" id="YP_002825749.1">
    <property type="nucleotide sequence ID" value="NC_012587.1"/>
</dbReference>
<dbReference type="SMR" id="C3MB03"/>
<dbReference type="STRING" id="394.NGR_c12140"/>
<dbReference type="KEGG" id="rhi:NGR_c12140"/>
<dbReference type="PATRIC" id="fig|394.7.peg.4031"/>
<dbReference type="eggNOG" id="COG0202">
    <property type="taxonomic scope" value="Bacteria"/>
</dbReference>
<dbReference type="HOGENOM" id="CLU_053084_0_0_5"/>
<dbReference type="OrthoDB" id="9805706at2"/>
<dbReference type="Proteomes" id="UP000001054">
    <property type="component" value="Chromosome"/>
</dbReference>
<dbReference type="GO" id="GO:0005737">
    <property type="term" value="C:cytoplasm"/>
    <property type="evidence" value="ECO:0007669"/>
    <property type="project" value="UniProtKB-ARBA"/>
</dbReference>
<dbReference type="GO" id="GO:0000428">
    <property type="term" value="C:DNA-directed RNA polymerase complex"/>
    <property type="evidence" value="ECO:0007669"/>
    <property type="project" value="UniProtKB-KW"/>
</dbReference>
<dbReference type="GO" id="GO:0003677">
    <property type="term" value="F:DNA binding"/>
    <property type="evidence" value="ECO:0007669"/>
    <property type="project" value="UniProtKB-UniRule"/>
</dbReference>
<dbReference type="GO" id="GO:0003899">
    <property type="term" value="F:DNA-directed RNA polymerase activity"/>
    <property type="evidence" value="ECO:0007669"/>
    <property type="project" value="UniProtKB-UniRule"/>
</dbReference>
<dbReference type="GO" id="GO:0046983">
    <property type="term" value="F:protein dimerization activity"/>
    <property type="evidence" value="ECO:0007669"/>
    <property type="project" value="InterPro"/>
</dbReference>
<dbReference type="GO" id="GO:0006351">
    <property type="term" value="P:DNA-templated transcription"/>
    <property type="evidence" value="ECO:0007669"/>
    <property type="project" value="UniProtKB-UniRule"/>
</dbReference>
<dbReference type="CDD" id="cd06928">
    <property type="entry name" value="RNAP_alpha_NTD"/>
    <property type="match status" value="1"/>
</dbReference>
<dbReference type="FunFam" id="1.10.150.20:FF:000001">
    <property type="entry name" value="DNA-directed RNA polymerase subunit alpha"/>
    <property type="match status" value="1"/>
</dbReference>
<dbReference type="FunFam" id="2.170.120.12:FF:000001">
    <property type="entry name" value="DNA-directed RNA polymerase subunit alpha"/>
    <property type="match status" value="1"/>
</dbReference>
<dbReference type="Gene3D" id="1.10.150.20">
    <property type="entry name" value="5' to 3' exonuclease, C-terminal subdomain"/>
    <property type="match status" value="1"/>
</dbReference>
<dbReference type="Gene3D" id="2.170.120.12">
    <property type="entry name" value="DNA-directed RNA polymerase, insert domain"/>
    <property type="match status" value="1"/>
</dbReference>
<dbReference type="Gene3D" id="3.30.1360.10">
    <property type="entry name" value="RNA polymerase, RBP11-like subunit"/>
    <property type="match status" value="1"/>
</dbReference>
<dbReference type="HAMAP" id="MF_00059">
    <property type="entry name" value="RNApol_bact_RpoA"/>
    <property type="match status" value="1"/>
</dbReference>
<dbReference type="InterPro" id="IPR011262">
    <property type="entry name" value="DNA-dir_RNA_pol_insert"/>
</dbReference>
<dbReference type="InterPro" id="IPR011263">
    <property type="entry name" value="DNA-dir_RNA_pol_RpoA/D/Rpb3"/>
</dbReference>
<dbReference type="InterPro" id="IPR011773">
    <property type="entry name" value="DNA-dir_RpoA"/>
</dbReference>
<dbReference type="InterPro" id="IPR036603">
    <property type="entry name" value="RBP11-like"/>
</dbReference>
<dbReference type="InterPro" id="IPR011260">
    <property type="entry name" value="RNAP_asu_C"/>
</dbReference>
<dbReference type="InterPro" id="IPR036643">
    <property type="entry name" value="RNApol_insert_sf"/>
</dbReference>
<dbReference type="NCBIfam" id="NF003513">
    <property type="entry name" value="PRK05182.1-2"/>
    <property type="match status" value="1"/>
</dbReference>
<dbReference type="NCBIfam" id="NF003519">
    <property type="entry name" value="PRK05182.2-5"/>
    <property type="match status" value="1"/>
</dbReference>
<dbReference type="NCBIfam" id="TIGR02027">
    <property type="entry name" value="rpoA"/>
    <property type="match status" value="1"/>
</dbReference>
<dbReference type="Pfam" id="PF01000">
    <property type="entry name" value="RNA_pol_A_bac"/>
    <property type="match status" value="1"/>
</dbReference>
<dbReference type="Pfam" id="PF03118">
    <property type="entry name" value="RNA_pol_A_CTD"/>
    <property type="match status" value="1"/>
</dbReference>
<dbReference type="Pfam" id="PF01193">
    <property type="entry name" value="RNA_pol_L"/>
    <property type="match status" value="1"/>
</dbReference>
<dbReference type="SMART" id="SM00662">
    <property type="entry name" value="RPOLD"/>
    <property type="match status" value="1"/>
</dbReference>
<dbReference type="SUPFAM" id="SSF47789">
    <property type="entry name" value="C-terminal domain of RNA polymerase alpha subunit"/>
    <property type="match status" value="1"/>
</dbReference>
<dbReference type="SUPFAM" id="SSF56553">
    <property type="entry name" value="Insert subdomain of RNA polymerase alpha subunit"/>
    <property type="match status" value="1"/>
</dbReference>
<dbReference type="SUPFAM" id="SSF55257">
    <property type="entry name" value="RBP11-like subunits of RNA polymerase"/>
    <property type="match status" value="1"/>
</dbReference>